<proteinExistence type="evidence at transcript level"/>
<organism>
    <name type="scientific">Bos taurus</name>
    <name type="common">Bovine</name>
    <dbReference type="NCBI Taxonomy" id="9913"/>
    <lineage>
        <taxon>Eukaryota</taxon>
        <taxon>Metazoa</taxon>
        <taxon>Chordata</taxon>
        <taxon>Craniata</taxon>
        <taxon>Vertebrata</taxon>
        <taxon>Euteleostomi</taxon>
        <taxon>Mammalia</taxon>
        <taxon>Eutheria</taxon>
        <taxon>Laurasiatheria</taxon>
        <taxon>Artiodactyla</taxon>
        <taxon>Ruminantia</taxon>
        <taxon>Pecora</taxon>
        <taxon>Bovidae</taxon>
        <taxon>Bovinae</taxon>
        <taxon>Bos</taxon>
    </lineage>
</organism>
<feature type="chain" id="PRO_0000249714" description="Lysosomal-associated transmembrane protein 4A">
    <location>
        <begin position="1"/>
        <end position="233"/>
    </location>
</feature>
<feature type="transmembrane region" description="Helical" evidence="3">
    <location>
        <begin position="29"/>
        <end position="49"/>
    </location>
</feature>
<feature type="transmembrane region" description="Helical" evidence="3">
    <location>
        <begin position="82"/>
        <end position="102"/>
    </location>
</feature>
<feature type="transmembrane region" description="Helical" evidence="3">
    <location>
        <begin position="108"/>
        <end position="128"/>
    </location>
</feature>
<feature type="transmembrane region" description="Helical" evidence="3">
    <location>
        <begin position="160"/>
        <end position="180"/>
    </location>
</feature>
<feature type="modified residue" description="N-acetylmethionine" evidence="2">
    <location>
        <position position="1"/>
    </location>
</feature>
<gene>
    <name type="primary">LAPTM4A</name>
</gene>
<sequence length="233" mass="26820">MVSMTFKRSRSDRFYSTRCCGCCHVRTGTIILGTWYMVVNLLMAILLTVEVTHPNSMPAVNIQYEVIGNYYSSERMADNACVLFAVSVLMFIISSMLVYGAISYQVGWLIPFFCYRLFDFVLSCLVAISSLTYLPRIKEYLDQLPDFPYKDDLLALDSSCLLFIVLVFFALFIIFKAYLINCVWNCYKYINNRNMPEIAVYPAFEAPPQYVLPTYEMAVKMPEKEPPPPYIPA</sequence>
<name>LAP4A_BOVIN</name>
<comment type="function">
    <text evidence="1">May function in the transport of nucleosides and/or nucleoside derivatives between the cytosol and the lumen of an intracellular membrane-bound compartment.</text>
</comment>
<comment type="subcellular location">
    <subcellularLocation>
        <location evidence="4">Endomembrane system</location>
        <topology evidence="4">Multi-pass membrane protein</topology>
    </subcellularLocation>
    <text evidence="4">May reside in an intracellular membrane-bound compartment.</text>
</comment>
<comment type="domain">
    <text evidence="1">The C-terminal domain is necessary for retention within intracellular membranes.</text>
</comment>
<comment type="similarity">
    <text evidence="4">Belongs to the LAPTM4/LAPTM5 transporter family.</text>
</comment>
<keyword id="KW-0007">Acetylation</keyword>
<keyword id="KW-0472">Membrane</keyword>
<keyword id="KW-1185">Reference proteome</keyword>
<keyword id="KW-0812">Transmembrane</keyword>
<keyword id="KW-1133">Transmembrane helix</keyword>
<keyword id="KW-0813">Transport</keyword>
<evidence type="ECO:0000250" key="1"/>
<evidence type="ECO:0000250" key="2">
    <source>
        <dbReference type="UniProtKB" id="Q15012"/>
    </source>
</evidence>
<evidence type="ECO:0000255" key="3"/>
<evidence type="ECO:0000305" key="4"/>
<dbReference type="EMBL" id="AY528247">
    <property type="protein sequence ID" value="AAS20595.1"/>
    <property type="molecule type" value="mRNA"/>
</dbReference>
<dbReference type="EMBL" id="BC105519">
    <property type="protein sequence ID" value="AAI05520.1"/>
    <property type="molecule type" value="mRNA"/>
</dbReference>
<dbReference type="RefSeq" id="NP_991368.1">
    <property type="nucleotide sequence ID" value="NM_205799.1"/>
</dbReference>
<dbReference type="FunCoup" id="Q6QRN8">
    <property type="interactions" value="2146"/>
</dbReference>
<dbReference type="STRING" id="9913.ENSBTAP00000027837"/>
<dbReference type="PaxDb" id="9913-ENSBTAP00000027837"/>
<dbReference type="Ensembl" id="ENSBTAT00000027837.2">
    <property type="protein sequence ID" value="ENSBTAP00000027837.1"/>
    <property type="gene ID" value="ENSBTAG00000020894.2"/>
</dbReference>
<dbReference type="GeneID" id="404135"/>
<dbReference type="KEGG" id="bta:404135"/>
<dbReference type="CTD" id="9741"/>
<dbReference type="VEuPathDB" id="HostDB:ENSBTAG00000020894"/>
<dbReference type="VGNC" id="VGNC:30787">
    <property type="gene designation" value="LAPTM4A"/>
</dbReference>
<dbReference type="eggNOG" id="ENOG502QSAX">
    <property type="taxonomic scope" value="Eukaryota"/>
</dbReference>
<dbReference type="GeneTree" id="ENSGT00940000153446"/>
<dbReference type="HOGENOM" id="CLU_059239_2_0_1"/>
<dbReference type="InParanoid" id="Q6QRN8"/>
<dbReference type="OMA" id="NCYKYII"/>
<dbReference type="OrthoDB" id="10002163at2759"/>
<dbReference type="TreeFam" id="TF330843"/>
<dbReference type="Proteomes" id="UP000009136">
    <property type="component" value="Chromosome 11"/>
</dbReference>
<dbReference type="Bgee" id="ENSBTAG00000020894">
    <property type="expression patterns" value="Expressed in spermatocyte and 107 other cell types or tissues"/>
</dbReference>
<dbReference type="GO" id="GO:0005794">
    <property type="term" value="C:Golgi apparatus"/>
    <property type="evidence" value="ECO:0007669"/>
    <property type="project" value="Ensembl"/>
</dbReference>
<dbReference type="GO" id="GO:0031902">
    <property type="term" value="C:late endosome membrane"/>
    <property type="evidence" value="ECO:0000250"/>
    <property type="project" value="UniProtKB"/>
</dbReference>
<dbReference type="GO" id="GO:0005765">
    <property type="term" value="C:lysosomal membrane"/>
    <property type="evidence" value="ECO:0000250"/>
    <property type="project" value="UniProtKB"/>
</dbReference>
<dbReference type="InterPro" id="IPR004687">
    <property type="entry name" value="LAPTM4/5"/>
</dbReference>
<dbReference type="InterPro" id="IPR018396">
    <property type="entry name" value="LAPTM_4A/5"/>
</dbReference>
<dbReference type="InterPro" id="IPR051115">
    <property type="entry name" value="LAPTM_transporter"/>
</dbReference>
<dbReference type="NCBIfam" id="TIGR00799">
    <property type="entry name" value="mtp"/>
    <property type="match status" value="1"/>
</dbReference>
<dbReference type="PANTHER" id="PTHR12479">
    <property type="entry name" value="LYSOSOMAL-ASSOCIATED TRANSMEMBRANE PROTEIN"/>
    <property type="match status" value="1"/>
</dbReference>
<dbReference type="PANTHER" id="PTHR12479:SF5">
    <property type="entry name" value="LYSOSOMAL-ASSOCIATED TRANSMEMBRANE PROTEIN 4A"/>
    <property type="match status" value="1"/>
</dbReference>
<dbReference type="Pfam" id="PF03821">
    <property type="entry name" value="Mtp"/>
    <property type="match status" value="2"/>
</dbReference>
<reference key="1">
    <citation type="submission" date="2004-01" db="EMBL/GenBank/DDBJ databases">
        <title>Analysis of gene expression in the bovine blastocyst or hatched blastocyst in vitro using ACP method.</title>
        <authorList>
            <person name="Shin M.L."/>
            <person name="Cui X.S."/>
            <person name="Park S.Y."/>
            <person name="Kim E.Y."/>
            <person name="Park S.P."/>
            <person name="Lee W.J."/>
            <person name="Hwang K.C."/>
            <person name="Kim N.H."/>
        </authorList>
    </citation>
    <scope>NUCLEOTIDE SEQUENCE [MRNA]</scope>
</reference>
<reference key="2">
    <citation type="submission" date="2005-09" db="EMBL/GenBank/DDBJ databases">
        <authorList>
            <consortium name="NIH - Mammalian Gene Collection (MGC) project"/>
        </authorList>
    </citation>
    <scope>NUCLEOTIDE SEQUENCE [LARGE SCALE MRNA]</scope>
    <source>
        <strain>Hereford</strain>
        <tissue>Uterus</tissue>
    </source>
</reference>
<protein>
    <recommendedName>
        <fullName>Lysosomal-associated transmembrane protein 4A</fullName>
    </recommendedName>
</protein>
<accession>Q6QRN8</accession>